<protein>
    <recommendedName>
        <fullName evidence="1">Holo-[acyl-carrier-protein] synthase</fullName>
        <shortName evidence="1">Holo-ACP synthase</shortName>
        <ecNumber evidence="1">2.7.8.7</ecNumber>
    </recommendedName>
    <alternativeName>
        <fullName evidence="1">4'-phosphopantetheinyl transferase AcpS</fullName>
    </alternativeName>
</protein>
<evidence type="ECO:0000255" key="1">
    <source>
        <dbReference type="HAMAP-Rule" id="MF_00101"/>
    </source>
</evidence>
<proteinExistence type="inferred from homology"/>
<keyword id="KW-0963">Cytoplasm</keyword>
<keyword id="KW-0275">Fatty acid biosynthesis</keyword>
<keyword id="KW-0276">Fatty acid metabolism</keyword>
<keyword id="KW-0444">Lipid biosynthesis</keyword>
<keyword id="KW-0443">Lipid metabolism</keyword>
<keyword id="KW-0460">Magnesium</keyword>
<keyword id="KW-0479">Metal-binding</keyword>
<keyword id="KW-1185">Reference proteome</keyword>
<keyword id="KW-0808">Transferase</keyword>
<sequence>MILGIGTDLANIERIQGVLDRFGDRFRNRVFTDVEQAKSERRLDVAGTYAKRWAAKEACSKALGTGLRMGIAWKDMSVSNLSTGQPVMHVTGWAKARLDELTPPGHEAVIHVTLTDDHPWAQAVVMIEARPILPDVQTAQTT</sequence>
<comment type="function">
    <text evidence="1">Transfers the 4'-phosphopantetheine moiety from coenzyme A to a Ser of acyl-carrier-protein.</text>
</comment>
<comment type="catalytic activity">
    <reaction evidence="1">
        <text>apo-[ACP] + CoA = holo-[ACP] + adenosine 3',5'-bisphosphate + H(+)</text>
        <dbReference type="Rhea" id="RHEA:12068"/>
        <dbReference type="Rhea" id="RHEA-COMP:9685"/>
        <dbReference type="Rhea" id="RHEA-COMP:9690"/>
        <dbReference type="ChEBI" id="CHEBI:15378"/>
        <dbReference type="ChEBI" id="CHEBI:29999"/>
        <dbReference type="ChEBI" id="CHEBI:57287"/>
        <dbReference type="ChEBI" id="CHEBI:58343"/>
        <dbReference type="ChEBI" id="CHEBI:64479"/>
        <dbReference type="EC" id="2.7.8.7"/>
    </reaction>
</comment>
<comment type="cofactor">
    <cofactor evidence="1">
        <name>Mg(2+)</name>
        <dbReference type="ChEBI" id="CHEBI:18420"/>
    </cofactor>
</comment>
<comment type="subcellular location">
    <subcellularLocation>
        <location evidence="1">Cytoplasm</location>
    </subcellularLocation>
</comment>
<comment type="similarity">
    <text evidence="1">Belongs to the P-Pant transferase superfamily. AcpS family.</text>
</comment>
<reference key="1">
    <citation type="submission" date="2006-05" db="EMBL/GenBank/DDBJ databases">
        <title>Complete sequence of chromosome of Silicibacter sp. TM1040.</title>
        <authorList>
            <consortium name="US DOE Joint Genome Institute"/>
            <person name="Copeland A."/>
            <person name="Lucas S."/>
            <person name="Lapidus A."/>
            <person name="Barry K."/>
            <person name="Detter J.C."/>
            <person name="Glavina del Rio T."/>
            <person name="Hammon N."/>
            <person name="Israni S."/>
            <person name="Dalin E."/>
            <person name="Tice H."/>
            <person name="Pitluck S."/>
            <person name="Brettin T."/>
            <person name="Bruce D."/>
            <person name="Han C."/>
            <person name="Tapia R."/>
            <person name="Goodwin L."/>
            <person name="Thompson L.S."/>
            <person name="Gilna P."/>
            <person name="Schmutz J."/>
            <person name="Larimer F."/>
            <person name="Land M."/>
            <person name="Hauser L."/>
            <person name="Kyrpides N."/>
            <person name="Kim E."/>
            <person name="Belas R."/>
            <person name="Moran M.A."/>
            <person name="Buchan A."/>
            <person name="Gonzalez J.M."/>
            <person name="Schell M.A."/>
            <person name="Sun F."/>
            <person name="Richardson P."/>
        </authorList>
    </citation>
    <scope>NUCLEOTIDE SEQUENCE [LARGE SCALE GENOMIC DNA]</scope>
    <source>
        <strain>TM1040</strain>
    </source>
</reference>
<dbReference type="EC" id="2.7.8.7" evidence="1"/>
<dbReference type="EMBL" id="CP000377">
    <property type="protein sequence ID" value="ABF65293.1"/>
    <property type="molecule type" value="Genomic_DNA"/>
</dbReference>
<dbReference type="RefSeq" id="WP_011539877.1">
    <property type="nucleotide sequence ID" value="NC_008044.1"/>
</dbReference>
<dbReference type="SMR" id="Q1GDH3"/>
<dbReference type="STRING" id="292414.TM1040_2561"/>
<dbReference type="KEGG" id="sit:TM1040_2561"/>
<dbReference type="eggNOG" id="COG0736">
    <property type="taxonomic scope" value="Bacteria"/>
</dbReference>
<dbReference type="HOGENOM" id="CLU_089696_0_2_5"/>
<dbReference type="OrthoDB" id="517356at2"/>
<dbReference type="Proteomes" id="UP000000636">
    <property type="component" value="Chromosome"/>
</dbReference>
<dbReference type="GO" id="GO:0005737">
    <property type="term" value="C:cytoplasm"/>
    <property type="evidence" value="ECO:0007669"/>
    <property type="project" value="UniProtKB-SubCell"/>
</dbReference>
<dbReference type="GO" id="GO:0008897">
    <property type="term" value="F:holo-[acyl-carrier-protein] synthase activity"/>
    <property type="evidence" value="ECO:0007669"/>
    <property type="project" value="UniProtKB-UniRule"/>
</dbReference>
<dbReference type="GO" id="GO:0000287">
    <property type="term" value="F:magnesium ion binding"/>
    <property type="evidence" value="ECO:0007669"/>
    <property type="project" value="UniProtKB-UniRule"/>
</dbReference>
<dbReference type="GO" id="GO:0006633">
    <property type="term" value="P:fatty acid biosynthetic process"/>
    <property type="evidence" value="ECO:0007669"/>
    <property type="project" value="UniProtKB-UniRule"/>
</dbReference>
<dbReference type="Gene3D" id="3.90.470.20">
    <property type="entry name" value="4'-phosphopantetheinyl transferase domain"/>
    <property type="match status" value="1"/>
</dbReference>
<dbReference type="HAMAP" id="MF_00101">
    <property type="entry name" value="AcpS"/>
    <property type="match status" value="1"/>
</dbReference>
<dbReference type="InterPro" id="IPR008278">
    <property type="entry name" value="4-PPantetheinyl_Trfase_dom"/>
</dbReference>
<dbReference type="InterPro" id="IPR037143">
    <property type="entry name" value="4-PPantetheinyl_Trfase_dom_sf"/>
</dbReference>
<dbReference type="InterPro" id="IPR002582">
    <property type="entry name" value="ACPS"/>
</dbReference>
<dbReference type="InterPro" id="IPR004568">
    <property type="entry name" value="Ppantetheine-prot_Trfase_dom"/>
</dbReference>
<dbReference type="NCBIfam" id="TIGR00516">
    <property type="entry name" value="acpS"/>
    <property type="match status" value="1"/>
</dbReference>
<dbReference type="NCBIfam" id="TIGR00556">
    <property type="entry name" value="pantethn_trn"/>
    <property type="match status" value="1"/>
</dbReference>
<dbReference type="Pfam" id="PF01648">
    <property type="entry name" value="ACPS"/>
    <property type="match status" value="1"/>
</dbReference>
<dbReference type="SUPFAM" id="SSF56214">
    <property type="entry name" value="4'-phosphopantetheinyl transferase"/>
    <property type="match status" value="1"/>
</dbReference>
<feature type="chain" id="PRO_1000008501" description="Holo-[acyl-carrier-protein] synthase">
    <location>
        <begin position="1"/>
        <end position="142"/>
    </location>
</feature>
<feature type="binding site" evidence="1">
    <location>
        <position position="8"/>
    </location>
    <ligand>
        <name>Mg(2+)</name>
        <dbReference type="ChEBI" id="CHEBI:18420"/>
    </ligand>
</feature>
<feature type="binding site" evidence="1">
    <location>
        <position position="57"/>
    </location>
    <ligand>
        <name>Mg(2+)</name>
        <dbReference type="ChEBI" id="CHEBI:18420"/>
    </ligand>
</feature>
<gene>
    <name evidence="1" type="primary">acpS</name>
    <name type="ordered locus">TM1040_2561</name>
</gene>
<accession>Q1GDH3</accession>
<organism>
    <name type="scientific">Ruegeria sp. (strain TM1040)</name>
    <name type="common">Silicibacter sp.</name>
    <dbReference type="NCBI Taxonomy" id="292414"/>
    <lineage>
        <taxon>Bacteria</taxon>
        <taxon>Pseudomonadati</taxon>
        <taxon>Pseudomonadota</taxon>
        <taxon>Alphaproteobacteria</taxon>
        <taxon>Rhodobacterales</taxon>
        <taxon>Roseobacteraceae</taxon>
        <taxon>Ruegeria</taxon>
    </lineage>
</organism>
<name>ACPS_RUEST</name>